<evidence type="ECO:0000250" key="1">
    <source>
        <dbReference type="UniProtKB" id="E9Q9A9"/>
    </source>
</evidence>
<evidence type="ECO:0000250" key="2">
    <source>
        <dbReference type="UniProtKB" id="P00973"/>
    </source>
</evidence>
<evidence type="ECO:0000250" key="3">
    <source>
        <dbReference type="UniProtKB" id="P29728"/>
    </source>
</evidence>
<evidence type="ECO:0000255" key="4"/>
<evidence type="ECO:0000305" key="5"/>
<reference key="1">
    <citation type="journal article" date="2006" name="J. Mol. Evol.">
        <title>The mammalian 2'-5' oligoadenylate synthetase gene family: evidence for concerted evolution of paralogous Oas1 genes in Rodentia and Artiodactyla.</title>
        <authorList>
            <person name="Perelygin A.A."/>
            <person name="Zharkikh A.A."/>
            <person name="Scherbik S.V."/>
            <person name="Brinton M.A."/>
        </authorList>
    </citation>
    <scope>NUCLEOTIDE SEQUENCE [MRNA]</scope>
    <source>
        <strain>Sprague-Dawley</strain>
        <tissue>Ovary</tissue>
    </source>
</reference>
<organism>
    <name type="scientific">Rattus norvegicus</name>
    <name type="common">Rat</name>
    <dbReference type="NCBI Taxonomy" id="10116"/>
    <lineage>
        <taxon>Eukaryota</taxon>
        <taxon>Metazoa</taxon>
        <taxon>Chordata</taxon>
        <taxon>Craniata</taxon>
        <taxon>Vertebrata</taxon>
        <taxon>Euteleostomi</taxon>
        <taxon>Mammalia</taxon>
        <taxon>Eutheria</taxon>
        <taxon>Euarchontoglires</taxon>
        <taxon>Glires</taxon>
        <taxon>Rodentia</taxon>
        <taxon>Myomorpha</taxon>
        <taxon>Muroidea</taxon>
        <taxon>Muridae</taxon>
        <taxon>Murinae</taxon>
        <taxon>Rattus</taxon>
    </lineage>
</organism>
<dbReference type="EC" id="2.7.7.84"/>
<dbReference type="EMBL" id="AY230746">
    <property type="protein sequence ID" value="AAP57396.1"/>
    <property type="molecule type" value="mRNA"/>
</dbReference>
<dbReference type="RefSeq" id="NP_001009715.1">
    <property type="nucleotide sequence ID" value="NM_001009715.1"/>
</dbReference>
<dbReference type="SMR" id="Q5MYU0"/>
<dbReference type="FunCoup" id="Q5MYU0">
    <property type="interactions" value="265"/>
</dbReference>
<dbReference type="STRING" id="10116.ENSRNOP00000073899"/>
<dbReference type="iPTMnet" id="Q5MYU0"/>
<dbReference type="PhosphoSitePlus" id="Q5MYU0"/>
<dbReference type="PaxDb" id="10116-ENSRNOP00000066845"/>
<dbReference type="GeneID" id="363938"/>
<dbReference type="KEGG" id="rno:363938"/>
<dbReference type="AGR" id="RGD:1359697"/>
<dbReference type="CTD" id="4939"/>
<dbReference type="RGD" id="1359697">
    <property type="gene designation" value="Oas2"/>
</dbReference>
<dbReference type="eggNOG" id="ENOG502S649">
    <property type="taxonomic scope" value="Eukaryota"/>
</dbReference>
<dbReference type="InParanoid" id="Q5MYU0"/>
<dbReference type="OrthoDB" id="54165at9989"/>
<dbReference type="PhylomeDB" id="Q5MYU0"/>
<dbReference type="PRO" id="PR:Q5MYU0"/>
<dbReference type="Proteomes" id="UP000002494">
    <property type="component" value="Unplaced"/>
</dbReference>
<dbReference type="GO" id="GO:0005737">
    <property type="term" value="C:cytoplasm"/>
    <property type="evidence" value="ECO:0000266"/>
    <property type="project" value="RGD"/>
</dbReference>
<dbReference type="GO" id="GO:0005829">
    <property type="term" value="C:cytosol"/>
    <property type="evidence" value="ECO:0000318"/>
    <property type="project" value="GO_Central"/>
</dbReference>
<dbReference type="GO" id="GO:0016020">
    <property type="term" value="C:membrane"/>
    <property type="evidence" value="ECO:0000318"/>
    <property type="project" value="GO_Central"/>
</dbReference>
<dbReference type="GO" id="GO:0005654">
    <property type="term" value="C:nucleoplasm"/>
    <property type="evidence" value="ECO:0000318"/>
    <property type="project" value="GO_Central"/>
</dbReference>
<dbReference type="GO" id="GO:0048471">
    <property type="term" value="C:perinuclear region of cytoplasm"/>
    <property type="evidence" value="ECO:0000250"/>
    <property type="project" value="UniProtKB"/>
</dbReference>
<dbReference type="GO" id="GO:0001730">
    <property type="term" value="F:2'-5'-oligoadenylate synthetase activity"/>
    <property type="evidence" value="ECO:0000250"/>
    <property type="project" value="UniProtKB"/>
</dbReference>
<dbReference type="GO" id="GO:0005524">
    <property type="term" value="F:ATP binding"/>
    <property type="evidence" value="ECO:0000250"/>
    <property type="project" value="UniProtKB"/>
</dbReference>
<dbReference type="GO" id="GO:0003725">
    <property type="term" value="F:double-stranded RNA binding"/>
    <property type="evidence" value="ECO:0000250"/>
    <property type="project" value="UniProtKB"/>
</dbReference>
<dbReference type="GO" id="GO:0046872">
    <property type="term" value="F:metal ion binding"/>
    <property type="evidence" value="ECO:0007669"/>
    <property type="project" value="UniProtKB-KW"/>
</dbReference>
<dbReference type="GO" id="GO:0140374">
    <property type="term" value="P:antiviral innate immune response"/>
    <property type="evidence" value="ECO:0000318"/>
    <property type="project" value="GO_Central"/>
</dbReference>
<dbReference type="GO" id="GO:0051607">
    <property type="term" value="P:defense response to virus"/>
    <property type="evidence" value="ECO:0000250"/>
    <property type="project" value="UniProtKB"/>
</dbReference>
<dbReference type="GO" id="GO:0070106">
    <property type="term" value="P:interleukin-27-mediated signaling pathway"/>
    <property type="evidence" value="ECO:0000266"/>
    <property type="project" value="RGD"/>
</dbReference>
<dbReference type="GO" id="GO:0045071">
    <property type="term" value="P:negative regulation of viral genome replication"/>
    <property type="evidence" value="ECO:0000318"/>
    <property type="project" value="GO_Central"/>
</dbReference>
<dbReference type="GO" id="GO:0032728">
    <property type="term" value="P:positive regulation of interferon-beta production"/>
    <property type="evidence" value="ECO:0000266"/>
    <property type="project" value="RGD"/>
</dbReference>
<dbReference type="GO" id="GO:0032760">
    <property type="term" value="P:positive regulation of tumor necrosis factor production"/>
    <property type="evidence" value="ECO:0000266"/>
    <property type="project" value="RGD"/>
</dbReference>
<dbReference type="GO" id="GO:1903487">
    <property type="term" value="P:regulation of lactation"/>
    <property type="evidence" value="ECO:0000250"/>
    <property type="project" value="UniProtKB"/>
</dbReference>
<dbReference type="GO" id="GO:0009617">
    <property type="term" value="P:response to bacterium"/>
    <property type="evidence" value="ECO:0000266"/>
    <property type="project" value="RGD"/>
</dbReference>
<dbReference type="GO" id="GO:0009615">
    <property type="term" value="P:response to virus"/>
    <property type="evidence" value="ECO:0000304"/>
    <property type="project" value="UniProtKB"/>
</dbReference>
<dbReference type="GO" id="GO:0006401">
    <property type="term" value="P:RNA catabolic process"/>
    <property type="evidence" value="ECO:0000266"/>
    <property type="project" value="RGD"/>
</dbReference>
<dbReference type="GO" id="GO:0060337">
    <property type="term" value="P:type I interferon-mediated signaling pathway"/>
    <property type="evidence" value="ECO:0000250"/>
    <property type="project" value="UniProtKB"/>
</dbReference>
<dbReference type="CDD" id="cd05400">
    <property type="entry name" value="NT_2-5OAS_ClassI-CCAase"/>
    <property type="match status" value="2"/>
</dbReference>
<dbReference type="FunFam" id="1.10.1410.20:FF:000001">
    <property type="entry name" value="2'-5'-oligoadenylate synthetase 1"/>
    <property type="match status" value="2"/>
</dbReference>
<dbReference type="FunFam" id="3.30.460.10:FF:000007">
    <property type="entry name" value="2'-5'-oligoadenylate synthetase 1"/>
    <property type="match status" value="2"/>
</dbReference>
<dbReference type="Gene3D" id="1.10.1410.20">
    <property type="entry name" value="2'-5'-oligoadenylate synthetase 1, domain 2"/>
    <property type="match status" value="2"/>
</dbReference>
<dbReference type="Gene3D" id="3.30.460.10">
    <property type="entry name" value="Beta Polymerase, domain 2"/>
    <property type="match status" value="2"/>
</dbReference>
<dbReference type="InterPro" id="IPR018952">
    <property type="entry name" value="2-5-oligoAdlate_synth_1_dom2/C"/>
</dbReference>
<dbReference type="InterPro" id="IPR006117">
    <property type="entry name" value="2-5OAS_C_CS"/>
</dbReference>
<dbReference type="InterPro" id="IPR043518">
    <property type="entry name" value="2-5OAS_N_CS"/>
</dbReference>
<dbReference type="InterPro" id="IPR006116">
    <property type="entry name" value="NT_2-5OAS_ClassI-CCAase"/>
</dbReference>
<dbReference type="InterPro" id="IPR043519">
    <property type="entry name" value="NT_sf"/>
</dbReference>
<dbReference type="InterPro" id="IPR002934">
    <property type="entry name" value="Polymerase_NTP_transf_dom"/>
</dbReference>
<dbReference type="PANTHER" id="PTHR11258:SF3">
    <property type="entry name" value="2'-5'-OLIGOADENYLATE SYNTHASE 2"/>
    <property type="match status" value="1"/>
</dbReference>
<dbReference type="PANTHER" id="PTHR11258">
    <property type="entry name" value="2-5 OLIGOADENYLATE SYNTHETASE"/>
    <property type="match status" value="1"/>
</dbReference>
<dbReference type="Pfam" id="PF01909">
    <property type="entry name" value="NTP_transf_2"/>
    <property type="match status" value="1"/>
</dbReference>
<dbReference type="Pfam" id="PF10421">
    <property type="entry name" value="OAS1_C"/>
    <property type="match status" value="2"/>
</dbReference>
<dbReference type="SUPFAM" id="SSF81301">
    <property type="entry name" value="Nucleotidyltransferase"/>
    <property type="match status" value="2"/>
</dbReference>
<dbReference type="SUPFAM" id="SSF81631">
    <property type="entry name" value="PAP/OAS1 substrate-binding domain"/>
    <property type="match status" value="2"/>
</dbReference>
<dbReference type="PROSITE" id="PS00832">
    <property type="entry name" value="25A_SYNTH_1"/>
    <property type="match status" value="1"/>
</dbReference>
<dbReference type="PROSITE" id="PS00833">
    <property type="entry name" value="25A_SYNTH_2"/>
    <property type="match status" value="2"/>
</dbReference>
<dbReference type="PROSITE" id="PS50152">
    <property type="entry name" value="25A_SYNTH_3"/>
    <property type="match status" value="2"/>
</dbReference>
<name>OAS2_RAT</name>
<feature type="initiator methionine" description="Removed" evidence="3">
    <location>
        <position position="1"/>
    </location>
</feature>
<feature type="chain" id="PRO_0000418629" description="2'-5'-oligoadenylate synthase 2">
    <location>
        <begin position="2"/>
        <end position="733"/>
    </location>
</feature>
<feature type="region of interest" description="OAS domain 1">
    <location>
        <begin position="47"/>
        <end position="365"/>
    </location>
</feature>
<feature type="region of interest" description="OAS domain 2">
    <location>
        <begin position="373"/>
        <end position="713"/>
    </location>
</feature>
<feature type="binding site" evidence="2">
    <location>
        <position position="427"/>
    </location>
    <ligand>
        <name>ATP</name>
        <dbReference type="ChEBI" id="CHEBI:30616"/>
    </ligand>
</feature>
<feature type="binding site" evidence="4">
    <location>
        <position position="439"/>
    </location>
    <ligand>
        <name>Mg(2+)</name>
        <dbReference type="ChEBI" id="CHEBI:18420"/>
        <note>catalytic</note>
    </ligand>
</feature>
<feature type="binding site" evidence="4">
    <location>
        <position position="441"/>
    </location>
    <ligand>
        <name>Mg(2+)</name>
        <dbReference type="ChEBI" id="CHEBI:18420"/>
        <note>catalytic</note>
    </ligand>
</feature>
<feature type="binding site" evidence="4">
    <location>
        <position position="510"/>
    </location>
    <ligand>
        <name>Mg(2+)</name>
        <dbReference type="ChEBI" id="CHEBI:18420"/>
        <note>catalytic</note>
    </ligand>
</feature>
<feature type="binding site" evidence="2">
    <location>
        <position position="574"/>
    </location>
    <ligand>
        <name>ATP</name>
        <dbReference type="ChEBI" id="CHEBI:30616"/>
    </ligand>
</feature>
<feature type="binding site" evidence="2">
    <location>
        <position position="577"/>
    </location>
    <ligand>
        <name>ATP</name>
        <dbReference type="ChEBI" id="CHEBI:30616"/>
    </ligand>
</feature>
<feature type="modified residue" description="N6-acetyllysine" evidence="3">
    <location>
        <position position="408"/>
    </location>
</feature>
<feature type="lipid moiety-binding region" description="N-myristoyl glycine" evidence="3">
    <location>
        <position position="2"/>
    </location>
</feature>
<keyword id="KW-0007">Acetylation</keyword>
<keyword id="KW-0051">Antiviral defense</keyword>
<keyword id="KW-0067">ATP-binding</keyword>
<keyword id="KW-0963">Cytoplasm</keyword>
<keyword id="KW-0325">Glycoprotein</keyword>
<keyword id="KW-0391">Immunity</keyword>
<keyword id="KW-0399">Innate immunity</keyword>
<keyword id="KW-0449">Lipoprotein</keyword>
<keyword id="KW-0460">Magnesium</keyword>
<keyword id="KW-0479">Metal-binding</keyword>
<keyword id="KW-0519">Myristate</keyword>
<keyword id="KW-0547">Nucleotide-binding</keyword>
<keyword id="KW-0548">Nucleotidyltransferase</keyword>
<keyword id="KW-1185">Reference proteome</keyword>
<keyword id="KW-0677">Repeat</keyword>
<keyword id="KW-0694">RNA-binding</keyword>
<keyword id="KW-0808">Transferase</keyword>
<accession>Q5MYU0</accession>
<gene>
    <name type="primary">Oas2</name>
</gene>
<proteinExistence type="evidence at transcript level"/>
<comment type="function">
    <text evidence="1 3">Interferon-induced, dsRNA-activated antiviral enzyme which plays a critical role in cellular innate antiviral response. Activated by detection of double stranded RNA (dsRNA): polymerizes higher oligomers of 2'-5'-oligoadenylates (2-5A) from ATP which then bind to the inactive monomeric form of ribonuclease L (RNASEL) leading to its dimerization and subsequent activation. Activation of RNASEL leads to degradation of cellular as well as viral RNA, resulting in the inhibition of protein synthesis, thus terminating viral replication. Can mediate the antiviral effect via the classical RNASEL-dependent pathway or an alternative antiviral pathway independent of RNASEL. In addition, it may also play a role in other cellular processes such as apoptosis, cell growth, differentiation and gene regulation (By similarity). May act as a negative regulator of lactation, stopping lactation in virally infected mammary gland lobules, thereby preventing transmission of viruses to neonates (By similarity). Non-infected lobules would not be affected, allowing efficient pup feeding during infection (By similarity).</text>
</comment>
<comment type="catalytic activity">
    <reaction evidence="3">
        <text>3 ATP = 5'-triphosphoadenylyl-(2'-&gt;5')-adenylyl-(2'-&gt;5')-adenosine + 2 diphosphate</text>
        <dbReference type="Rhea" id="RHEA:34407"/>
        <dbReference type="ChEBI" id="CHEBI:30616"/>
        <dbReference type="ChEBI" id="CHEBI:33019"/>
        <dbReference type="ChEBI" id="CHEBI:67143"/>
        <dbReference type="EC" id="2.7.7.84"/>
    </reaction>
</comment>
<comment type="cofactor">
    <cofactor evidence="3">
        <name>Mg(2+)</name>
        <dbReference type="ChEBI" id="CHEBI:18420"/>
    </cofactor>
</comment>
<comment type="activity regulation">
    <text evidence="3">Produced as a latent enzyme which is activated by double stranded RNA (dsRNA) generated during the course of viral infection. The dsRNA activator must be at least 15 nucleotides long, and no modification of the 2'-hydroxyl group is tolerated. ssRNA or dsDNA do not act as activators. Strongly inhibited by copper, iron and zinc ions. Partially inhibited by cobalt and nickel ions.</text>
</comment>
<comment type="subunit">
    <text evidence="3">Homodimer.</text>
</comment>
<comment type="subcellular location">
    <subcellularLocation>
        <location evidence="3">Cytoplasm</location>
    </subcellularLocation>
    <subcellularLocation>
        <location evidence="3">Cytoplasm</location>
        <location evidence="3">Perinuclear region</location>
    </subcellularLocation>
</comment>
<comment type="PTM">
    <text evidence="3">Myristoylation is not essential for its activity.</text>
</comment>
<comment type="PTM">
    <text evidence="3">Glycosylated. Glycosylation is essential for its activity.</text>
</comment>
<comment type="similarity">
    <text evidence="5">Belongs to the 2-5A synthase family.</text>
</comment>
<sequence>MGNWMPGWSSSGSLGVPPMPVQKLEKSVQVNLEPDEKCLSQTEVSSVPSQKLEEYIQANLKPDEESLKQIDQAVDAISDLLCSEVMIDVLKVVKGGSYGRKTVLRDCSDGTLVLFTGLFKQFQDQKKYQDKLLDLIEQRLKSHEKYKKSVKRKLSLLEVQVSIPGQSILLQLLPTFNPLCISENPSAQVYQNLKRSMDQVKASPGEFSDCFTTLQQRFFEKYPGRLKDLILLVKHWYKQLQDKWIIPSPPPLLYALELLTVYAWEQGCQTKDFDITQGIRTVLQLISQPTNLCVYWLDNYNFEDETVRNNLLHQLNSPRPVILDPTDPTNNVGKDDRFWQLLAEEAQEWLNSLRLNKPHKPCWDVLPMPFFITPSHCLDKFIKDFLQPDKVFLNQIKRAVDIICSFLKETCFQNSDIKVLKIIKGGSTAKGTALQQRSDADIIVFLSSLDSYDSLETERSQYVQEIRKQLEACQKAFNLGVKFDISKWMAPRVLSFTLESKSLKQSVEFDVLPAYDALGQLRSDYTSRLKAYKKLIELYASQDSLKGGEFSVCFTELQRDFIETRPTKLKGLIRLIKHWYKQCERKMKPKASLPPKYALELLTVYAWEHGSGTDGFDTAEGFRTVLDLVIRYRQLCVFWTVNYNFEEDHMRKFLLTQIQKKRPVILDPADPTGDVGGGDRWCWHLLAKEAKEWLSSSCFQVEPKSPVQPWKVPVVQTPGSCGAQIYPVVGGVY</sequence>
<protein>
    <recommendedName>
        <fullName>2'-5'-oligoadenylate synthase 2</fullName>
        <shortName>(2-5')oligo(A) synthase 2</shortName>
        <shortName>2-5A synthase 2</shortName>
        <ecNumber>2.7.7.84</ecNumber>
    </recommendedName>
</protein>